<comment type="subunit">
    <text evidence="1">Part of the 50S ribosomal subunit. Contacts protein L32.</text>
</comment>
<comment type="similarity">
    <text evidence="1">Belongs to the bacterial ribosomal protein bL17 family.</text>
</comment>
<proteinExistence type="inferred from homology"/>
<accession>P44355</accession>
<keyword id="KW-1185">Reference proteome</keyword>
<keyword id="KW-0687">Ribonucleoprotein</keyword>
<keyword id="KW-0689">Ribosomal protein</keyword>
<gene>
    <name evidence="1" type="primary">rplQ</name>
    <name evidence="1" type="synonym">rpl17</name>
    <name type="ordered locus">HI_0803</name>
</gene>
<reference key="1">
    <citation type="journal article" date="1995" name="Science">
        <title>Whole-genome random sequencing and assembly of Haemophilus influenzae Rd.</title>
        <authorList>
            <person name="Fleischmann R.D."/>
            <person name="Adams M.D."/>
            <person name="White O."/>
            <person name="Clayton R.A."/>
            <person name="Kirkness E.F."/>
            <person name="Kerlavage A.R."/>
            <person name="Bult C.J."/>
            <person name="Tomb J.-F."/>
            <person name="Dougherty B.A."/>
            <person name="Merrick J.M."/>
            <person name="McKenney K."/>
            <person name="Sutton G.G."/>
            <person name="FitzHugh W."/>
            <person name="Fields C.A."/>
            <person name="Gocayne J.D."/>
            <person name="Scott J.D."/>
            <person name="Shirley R."/>
            <person name="Liu L.-I."/>
            <person name="Glodek A."/>
            <person name="Kelley J.M."/>
            <person name="Weidman J.F."/>
            <person name="Phillips C.A."/>
            <person name="Spriggs T."/>
            <person name="Hedblom E."/>
            <person name="Cotton M.D."/>
            <person name="Utterback T.R."/>
            <person name="Hanna M.C."/>
            <person name="Nguyen D.T."/>
            <person name="Saudek D.M."/>
            <person name="Brandon R.C."/>
            <person name="Fine L.D."/>
            <person name="Fritchman J.L."/>
            <person name="Fuhrmann J.L."/>
            <person name="Geoghagen N.S.M."/>
            <person name="Gnehm C.L."/>
            <person name="McDonald L.A."/>
            <person name="Small K.V."/>
            <person name="Fraser C.M."/>
            <person name="Smith H.O."/>
            <person name="Venter J.C."/>
        </authorList>
    </citation>
    <scope>NUCLEOTIDE SEQUENCE [LARGE SCALE GENOMIC DNA]</scope>
    <source>
        <strain>ATCC 51907 / DSM 11121 / KW20 / Rd</strain>
    </source>
</reference>
<organism>
    <name type="scientific">Haemophilus influenzae (strain ATCC 51907 / DSM 11121 / KW20 / Rd)</name>
    <dbReference type="NCBI Taxonomy" id="71421"/>
    <lineage>
        <taxon>Bacteria</taxon>
        <taxon>Pseudomonadati</taxon>
        <taxon>Pseudomonadota</taxon>
        <taxon>Gammaproteobacteria</taxon>
        <taxon>Pasteurellales</taxon>
        <taxon>Pasteurellaceae</taxon>
        <taxon>Haemophilus</taxon>
    </lineage>
</organism>
<evidence type="ECO:0000255" key="1">
    <source>
        <dbReference type="HAMAP-Rule" id="MF_01368"/>
    </source>
</evidence>
<evidence type="ECO:0000305" key="2"/>
<feature type="chain" id="PRO_0000175527" description="Large ribosomal subunit protein bL17">
    <location>
        <begin position="1"/>
        <end position="128"/>
    </location>
</feature>
<name>RL17_HAEIN</name>
<sequence length="128" mass="14473">MRHRKSGRQLNRNSSHRQAMFRNLASALVSHEIIKTTLPKAKELRRVVEPLITLAKVDSVANRRLAFARTRNVETVAKLFNELGPRFAQRAGGYTRILKCGFRAGDNAPMAYIELVDRPEVAEATTEE</sequence>
<dbReference type="EMBL" id="L42023">
    <property type="protein sequence ID" value="AAC22462.1"/>
    <property type="molecule type" value="Genomic_DNA"/>
</dbReference>
<dbReference type="PIR" id="C64095">
    <property type="entry name" value="C64095"/>
</dbReference>
<dbReference type="RefSeq" id="NP_438963.1">
    <property type="nucleotide sequence ID" value="NC_000907.1"/>
</dbReference>
<dbReference type="SMR" id="P44355"/>
<dbReference type="STRING" id="71421.HI_0803"/>
<dbReference type="EnsemblBacteria" id="AAC22462">
    <property type="protein sequence ID" value="AAC22462"/>
    <property type="gene ID" value="HI_0803"/>
</dbReference>
<dbReference type="KEGG" id="hin:HI_0803"/>
<dbReference type="PATRIC" id="fig|71421.8.peg.843"/>
<dbReference type="eggNOG" id="COG0203">
    <property type="taxonomic scope" value="Bacteria"/>
</dbReference>
<dbReference type="HOGENOM" id="CLU_074407_2_0_6"/>
<dbReference type="OrthoDB" id="9809073at2"/>
<dbReference type="PhylomeDB" id="P44355"/>
<dbReference type="BioCyc" id="HINF71421:G1GJ1-844-MONOMER"/>
<dbReference type="Proteomes" id="UP000000579">
    <property type="component" value="Chromosome"/>
</dbReference>
<dbReference type="GO" id="GO:0022625">
    <property type="term" value="C:cytosolic large ribosomal subunit"/>
    <property type="evidence" value="ECO:0000318"/>
    <property type="project" value="GO_Central"/>
</dbReference>
<dbReference type="GO" id="GO:0003735">
    <property type="term" value="F:structural constituent of ribosome"/>
    <property type="evidence" value="ECO:0000318"/>
    <property type="project" value="GO_Central"/>
</dbReference>
<dbReference type="GO" id="GO:0006412">
    <property type="term" value="P:translation"/>
    <property type="evidence" value="ECO:0007669"/>
    <property type="project" value="UniProtKB-UniRule"/>
</dbReference>
<dbReference type="FunFam" id="3.90.1030.10:FF:000001">
    <property type="entry name" value="50S ribosomal protein L17"/>
    <property type="match status" value="1"/>
</dbReference>
<dbReference type="Gene3D" id="3.90.1030.10">
    <property type="entry name" value="Ribosomal protein L17"/>
    <property type="match status" value="1"/>
</dbReference>
<dbReference type="HAMAP" id="MF_01368">
    <property type="entry name" value="Ribosomal_bL17"/>
    <property type="match status" value="1"/>
</dbReference>
<dbReference type="InterPro" id="IPR000456">
    <property type="entry name" value="Ribosomal_bL17"/>
</dbReference>
<dbReference type="InterPro" id="IPR047859">
    <property type="entry name" value="Ribosomal_bL17_CS"/>
</dbReference>
<dbReference type="InterPro" id="IPR036373">
    <property type="entry name" value="Ribosomal_bL17_sf"/>
</dbReference>
<dbReference type="NCBIfam" id="TIGR00059">
    <property type="entry name" value="L17"/>
    <property type="match status" value="1"/>
</dbReference>
<dbReference type="PANTHER" id="PTHR14413:SF16">
    <property type="entry name" value="LARGE RIBOSOMAL SUBUNIT PROTEIN BL17M"/>
    <property type="match status" value="1"/>
</dbReference>
<dbReference type="PANTHER" id="PTHR14413">
    <property type="entry name" value="RIBOSOMAL PROTEIN L17"/>
    <property type="match status" value="1"/>
</dbReference>
<dbReference type="Pfam" id="PF01196">
    <property type="entry name" value="Ribosomal_L17"/>
    <property type="match status" value="1"/>
</dbReference>
<dbReference type="SUPFAM" id="SSF64263">
    <property type="entry name" value="Prokaryotic ribosomal protein L17"/>
    <property type="match status" value="1"/>
</dbReference>
<dbReference type="PROSITE" id="PS01167">
    <property type="entry name" value="RIBOSOMAL_L17"/>
    <property type="match status" value="1"/>
</dbReference>
<protein>
    <recommendedName>
        <fullName evidence="1">Large ribosomal subunit protein bL17</fullName>
    </recommendedName>
    <alternativeName>
        <fullName evidence="2">50S ribosomal protein L17</fullName>
    </alternativeName>
</protein>